<accession>Q483B5</accession>
<proteinExistence type="inferred from homology"/>
<sequence>MRLIEKVWFNDHPAKWLLVPMLLPLSALFWLISTLRRLSYKIGLSRSCQLSKPVIVVGNIGVGGNGKTPIVLYLVELTRLLGLTPGVISRGYGGKAPHYPYLLDEKSTSIEAGDEPILIQQRCQVPIAVGSDRIASAKLLIAQGCDIIISDDGLQHYRLARDLELVVVDGKRLFGNGLLLPAGPLREGLWRLPKSDLVIYNGKNDQDYQEKNYPCMHMTLAATELCNLLTGERIYLTDFIRLNDSVNAIAGIGAPQRFFDTLKEHQFKVINQQSFVDHHAFVLADFNEFDDNIPLLMTEKDAVKCHDFCKENWWYLPVDATFSDADRQLIIDRTQIAVQSVIQ</sequence>
<keyword id="KW-0067">ATP-binding</keyword>
<keyword id="KW-0418">Kinase</keyword>
<keyword id="KW-0441">Lipid A biosynthesis</keyword>
<keyword id="KW-0444">Lipid biosynthesis</keyword>
<keyword id="KW-0443">Lipid metabolism</keyword>
<keyword id="KW-0547">Nucleotide-binding</keyword>
<keyword id="KW-0808">Transferase</keyword>
<feature type="chain" id="PRO_0000229952" description="Tetraacyldisaccharide 4'-kinase">
    <location>
        <begin position="1"/>
        <end position="343"/>
    </location>
</feature>
<feature type="binding site" evidence="1">
    <location>
        <begin position="61"/>
        <end position="68"/>
    </location>
    <ligand>
        <name>ATP</name>
        <dbReference type="ChEBI" id="CHEBI:30616"/>
    </ligand>
</feature>
<dbReference type="EC" id="2.7.1.130" evidence="1"/>
<dbReference type="EMBL" id="CP000083">
    <property type="protein sequence ID" value="AAZ24412.1"/>
    <property type="molecule type" value="Genomic_DNA"/>
</dbReference>
<dbReference type="RefSeq" id="WP_011042946.1">
    <property type="nucleotide sequence ID" value="NC_003910.7"/>
</dbReference>
<dbReference type="SMR" id="Q483B5"/>
<dbReference type="STRING" id="167879.CPS_2126"/>
<dbReference type="KEGG" id="cps:CPS_2126"/>
<dbReference type="HOGENOM" id="CLU_038816_2_0_6"/>
<dbReference type="UniPathway" id="UPA00359">
    <property type="reaction ID" value="UER00482"/>
</dbReference>
<dbReference type="Proteomes" id="UP000000547">
    <property type="component" value="Chromosome"/>
</dbReference>
<dbReference type="GO" id="GO:0005886">
    <property type="term" value="C:plasma membrane"/>
    <property type="evidence" value="ECO:0007669"/>
    <property type="project" value="TreeGrafter"/>
</dbReference>
<dbReference type="GO" id="GO:0005524">
    <property type="term" value="F:ATP binding"/>
    <property type="evidence" value="ECO:0007669"/>
    <property type="project" value="UniProtKB-UniRule"/>
</dbReference>
<dbReference type="GO" id="GO:0009029">
    <property type="term" value="F:tetraacyldisaccharide 4'-kinase activity"/>
    <property type="evidence" value="ECO:0007669"/>
    <property type="project" value="UniProtKB-UniRule"/>
</dbReference>
<dbReference type="GO" id="GO:0009245">
    <property type="term" value="P:lipid A biosynthetic process"/>
    <property type="evidence" value="ECO:0007669"/>
    <property type="project" value="UniProtKB-UniRule"/>
</dbReference>
<dbReference type="GO" id="GO:0009244">
    <property type="term" value="P:lipopolysaccharide core region biosynthetic process"/>
    <property type="evidence" value="ECO:0007669"/>
    <property type="project" value="TreeGrafter"/>
</dbReference>
<dbReference type="HAMAP" id="MF_00409">
    <property type="entry name" value="LpxK"/>
    <property type="match status" value="1"/>
</dbReference>
<dbReference type="InterPro" id="IPR003758">
    <property type="entry name" value="LpxK"/>
</dbReference>
<dbReference type="InterPro" id="IPR027417">
    <property type="entry name" value="P-loop_NTPase"/>
</dbReference>
<dbReference type="NCBIfam" id="TIGR00682">
    <property type="entry name" value="lpxK"/>
    <property type="match status" value="1"/>
</dbReference>
<dbReference type="PANTHER" id="PTHR42724">
    <property type="entry name" value="TETRAACYLDISACCHARIDE 4'-KINASE"/>
    <property type="match status" value="1"/>
</dbReference>
<dbReference type="PANTHER" id="PTHR42724:SF1">
    <property type="entry name" value="TETRAACYLDISACCHARIDE 4'-KINASE, MITOCHONDRIAL-RELATED"/>
    <property type="match status" value="1"/>
</dbReference>
<dbReference type="Pfam" id="PF02606">
    <property type="entry name" value="LpxK"/>
    <property type="match status" value="1"/>
</dbReference>
<dbReference type="SUPFAM" id="SSF52540">
    <property type="entry name" value="P-loop containing nucleoside triphosphate hydrolases"/>
    <property type="match status" value="1"/>
</dbReference>
<protein>
    <recommendedName>
        <fullName evidence="1">Tetraacyldisaccharide 4'-kinase</fullName>
        <ecNumber evidence="1">2.7.1.130</ecNumber>
    </recommendedName>
    <alternativeName>
        <fullName evidence="1">Lipid A 4'-kinase</fullName>
    </alternativeName>
</protein>
<organism>
    <name type="scientific">Colwellia psychrerythraea (strain 34H / ATCC BAA-681)</name>
    <name type="common">Vibrio psychroerythus</name>
    <dbReference type="NCBI Taxonomy" id="167879"/>
    <lineage>
        <taxon>Bacteria</taxon>
        <taxon>Pseudomonadati</taxon>
        <taxon>Pseudomonadota</taxon>
        <taxon>Gammaproteobacteria</taxon>
        <taxon>Alteromonadales</taxon>
        <taxon>Colwelliaceae</taxon>
        <taxon>Colwellia</taxon>
    </lineage>
</organism>
<comment type="function">
    <text evidence="1">Transfers the gamma-phosphate of ATP to the 4'-position of a tetraacyldisaccharide 1-phosphate intermediate (termed DS-1-P) to form tetraacyldisaccharide 1,4'-bis-phosphate (lipid IVA).</text>
</comment>
<comment type="catalytic activity">
    <reaction evidence="1">
        <text>a lipid A disaccharide + ATP = a lipid IVA + ADP + H(+)</text>
        <dbReference type="Rhea" id="RHEA:67840"/>
        <dbReference type="ChEBI" id="CHEBI:15378"/>
        <dbReference type="ChEBI" id="CHEBI:30616"/>
        <dbReference type="ChEBI" id="CHEBI:176343"/>
        <dbReference type="ChEBI" id="CHEBI:176425"/>
        <dbReference type="ChEBI" id="CHEBI:456216"/>
        <dbReference type="EC" id="2.7.1.130"/>
    </reaction>
</comment>
<comment type="pathway">
    <text evidence="1">Glycolipid biosynthesis; lipid IV(A) biosynthesis; lipid IV(A) from (3R)-3-hydroxytetradecanoyl-[acyl-carrier-protein] and UDP-N-acetyl-alpha-D-glucosamine: step 6/6.</text>
</comment>
<comment type="similarity">
    <text evidence="1">Belongs to the LpxK family.</text>
</comment>
<reference key="1">
    <citation type="journal article" date="2005" name="Proc. Natl. Acad. Sci. U.S.A.">
        <title>The psychrophilic lifestyle as revealed by the genome sequence of Colwellia psychrerythraea 34H through genomic and proteomic analyses.</title>
        <authorList>
            <person name="Methe B.A."/>
            <person name="Nelson K.E."/>
            <person name="Deming J.W."/>
            <person name="Momen B."/>
            <person name="Melamud E."/>
            <person name="Zhang X."/>
            <person name="Moult J."/>
            <person name="Madupu R."/>
            <person name="Nelson W.C."/>
            <person name="Dodson R.J."/>
            <person name="Brinkac L.M."/>
            <person name="Daugherty S.C."/>
            <person name="Durkin A.S."/>
            <person name="DeBoy R.T."/>
            <person name="Kolonay J.F."/>
            <person name="Sullivan S.A."/>
            <person name="Zhou L."/>
            <person name="Davidsen T.M."/>
            <person name="Wu M."/>
            <person name="Huston A.L."/>
            <person name="Lewis M."/>
            <person name="Weaver B."/>
            <person name="Weidman J.F."/>
            <person name="Khouri H."/>
            <person name="Utterback T.R."/>
            <person name="Feldblyum T.V."/>
            <person name="Fraser C.M."/>
        </authorList>
    </citation>
    <scope>NUCLEOTIDE SEQUENCE [LARGE SCALE GENOMIC DNA]</scope>
    <source>
        <strain>34H / ATCC BAA-681</strain>
    </source>
</reference>
<name>LPXK_COLP3</name>
<evidence type="ECO:0000255" key="1">
    <source>
        <dbReference type="HAMAP-Rule" id="MF_00409"/>
    </source>
</evidence>
<gene>
    <name evidence="1" type="primary">lpxK</name>
    <name type="ordered locus">CPS_2126</name>
</gene>